<keyword id="KW-1185">Reference proteome</keyword>
<proteinExistence type="predicted"/>
<sequence length="113" mass="13269">MDKIKNYLEKLQAFYKLYSLNLTQGTEILIIQIIDKGNLIFDSIEKGKTFNESKIIEPLLFIFKKINTILAILKLTFTKDDLIGILQSLEEHISEFIIANYKYDFEIEEDDED</sequence>
<reference key="1">
    <citation type="journal article" date="2000" name="Nature">
        <title>The complete sequence of the mucosal pathogen Ureaplasma urealyticum.</title>
        <authorList>
            <person name="Glass J.I."/>
            <person name="Lefkowitz E.J."/>
            <person name="Glass J.S."/>
            <person name="Heiner C.R."/>
            <person name="Chen E.Y."/>
            <person name="Cassell G.H."/>
        </authorList>
    </citation>
    <scope>NUCLEOTIDE SEQUENCE [LARGE SCALE GENOMIC DNA]</scope>
    <source>
        <strain>ATCC 700970</strain>
    </source>
</reference>
<gene>
    <name type="ordered locus">UU148</name>
</gene>
<organism>
    <name type="scientific">Ureaplasma parvum serovar 3 (strain ATCC 700970)</name>
    <dbReference type="NCBI Taxonomy" id="273119"/>
    <lineage>
        <taxon>Bacteria</taxon>
        <taxon>Bacillati</taxon>
        <taxon>Mycoplasmatota</taxon>
        <taxon>Mycoplasmoidales</taxon>
        <taxon>Mycoplasmoidaceae</taxon>
        <taxon>Ureaplasma</taxon>
    </lineage>
</organism>
<feature type="chain" id="PRO_0000220807" description="Uncharacterized protein UU148">
    <location>
        <begin position="1"/>
        <end position="113"/>
    </location>
</feature>
<name>Y148_UREPA</name>
<protein>
    <recommendedName>
        <fullName>Uncharacterized protein UU148</fullName>
    </recommendedName>
</protein>
<accession>Q9PQZ6</accession>
<dbReference type="EMBL" id="AF222894">
    <property type="protein sequence ID" value="AAF30554.1"/>
    <property type="molecule type" value="Genomic_DNA"/>
</dbReference>
<dbReference type="RefSeq" id="WP_004025751.1">
    <property type="nucleotide sequence ID" value="NC_002162.1"/>
</dbReference>
<dbReference type="STRING" id="273119.UU148"/>
<dbReference type="EnsemblBacteria" id="AAF30554">
    <property type="protein sequence ID" value="AAF30554"/>
    <property type="gene ID" value="UU148"/>
</dbReference>
<dbReference type="KEGG" id="uur:UU148"/>
<dbReference type="HOGENOM" id="CLU_2132439_0_0_14"/>
<dbReference type="OrthoDB" id="9869324at2"/>
<dbReference type="Proteomes" id="UP000000423">
    <property type="component" value="Chromosome"/>
</dbReference>